<comment type="subunit">
    <text>Tetramer of two alpha and two beta chains.</text>
</comment>
<comment type="similarity">
    <text evidence="1">Belongs to the leguminous lectin family.</text>
</comment>
<keyword id="KW-0903">Direct protein sequencing</keyword>
<keyword id="KW-0430">Lectin</keyword>
<dbReference type="PIR" id="D26148">
    <property type="entry name" value="LNLDAA"/>
</dbReference>
<dbReference type="SMR" id="P07442"/>
<dbReference type="GO" id="GO:0030246">
    <property type="term" value="F:carbohydrate binding"/>
    <property type="evidence" value="ECO:0007669"/>
    <property type="project" value="UniProtKB-KW"/>
</dbReference>
<dbReference type="Gene3D" id="2.60.120.200">
    <property type="match status" value="1"/>
</dbReference>
<dbReference type="InterPro" id="IPR013320">
    <property type="entry name" value="ConA-like_dom_sf"/>
</dbReference>
<dbReference type="InterPro" id="IPR000985">
    <property type="entry name" value="Lectin_LegA_CS"/>
</dbReference>
<dbReference type="InterPro" id="IPR001220">
    <property type="entry name" value="Legume_lectin_dom"/>
</dbReference>
<dbReference type="Pfam" id="PF00139">
    <property type="entry name" value="Lectin_legB"/>
    <property type="match status" value="1"/>
</dbReference>
<dbReference type="SUPFAM" id="SSF49899">
    <property type="entry name" value="Concanavalin A-like lectins/glucanases"/>
    <property type="match status" value="1"/>
</dbReference>
<dbReference type="PROSITE" id="PS00308">
    <property type="entry name" value="LECTIN_LEGUME_ALPHA"/>
    <property type="match status" value="1"/>
</dbReference>
<accession>P07442</accession>
<organism>
    <name type="scientific">Lathyrus clymenum</name>
    <name type="common">Spanish vetchling</name>
    <name type="synonym">Lathyrus articulatus</name>
    <dbReference type="NCBI Taxonomy" id="3855"/>
    <lineage>
        <taxon>Eukaryota</taxon>
        <taxon>Viridiplantae</taxon>
        <taxon>Streptophyta</taxon>
        <taxon>Embryophyta</taxon>
        <taxon>Tracheophyta</taxon>
        <taxon>Spermatophyta</taxon>
        <taxon>Magnoliopsida</taxon>
        <taxon>eudicotyledons</taxon>
        <taxon>Gunneridae</taxon>
        <taxon>Pentapetalae</taxon>
        <taxon>rosids</taxon>
        <taxon>fabids</taxon>
        <taxon>Fabales</taxon>
        <taxon>Fabaceae</taxon>
        <taxon>Papilionoideae</taxon>
        <taxon>50 kb inversion clade</taxon>
        <taxon>NPAAA clade</taxon>
        <taxon>Hologalegina</taxon>
        <taxon>IRL clade</taxon>
        <taxon>Fabeae</taxon>
        <taxon>Lathyrus</taxon>
    </lineage>
</organism>
<protein>
    <recommendedName>
        <fullName>Lectin alpha chain</fullName>
    </recommendedName>
</protein>
<name>LECA_LATCY</name>
<feature type="chain" id="PRO_0000105101" description="Lectin alpha chain">
    <location>
        <begin position="1"/>
        <end position="53"/>
    </location>
</feature>
<proteinExistence type="evidence at protein level"/>
<evidence type="ECO:0000305" key="1"/>
<sequence length="53" mass="5759">ATSYTLNEVVPLKEFVPEWVRIGFSATTGAEFAAHEVLSWSFHSELAGTSSSN</sequence>
<reference key="1">
    <citation type="journal article" date="1986" name="Phytochemistry">
        <title>The amino acid sequences of the alpha subunits of the lectins from Lathyrus cicera, L. alphaca and L. articulatus.</title>
        <authorList>
            <person name="Sousa-Cavada B."/>
            <person name="Richardson M."/>
            <person name="Yarwood A."/>
            <person name="Pere D."/>
            <person name="Rouge P."/>
        </authorList>
    </citation>
    <scope>PROTEIN SEQUENCE</scope>
</reference>